<evidence type="ECO:0000255" key="1">
    <source>
        <dbReference type="HAMAP-Rule" id="MF_01361"/>
    </source>
</evidence>
<keyword id="KW-1003">Cell membrane</keyword>
<keyword id="KW-0472">Membrane</keyword>
<keyword id="KW-0812">Transmembrane</keyword>
<keyword id="KW-1133">Transmembrane helix</keyword>
<feature type="chain" id="PRO_5000211660" description="UPF0391 membrane protein Ajs_0703">
    <location>
        <begin position="1"/>
        <end position="61"/>
    </location>
</feature>
<feature type="transmembrane region" description="Helical" evidence="1">
    <location>
        <begin position="5"/>
        <end position="25"/>
    </location>
</feature>
<feature type="transmembrane region" description="Helical" evidence="1">
    <location>
        <begin position="33"/>
        <end position="53"/>
    </location>
</feature>
<protein>
    <recommendedName>
        <fullName evidence="1">UPF0391 membrane protein Ajs_0703</fullName>
    </recommendedName>
</protein>
<sequence length="61" mass="6160">MLKYAIIFAIISLIAGALGFTGVAAGSAAIAKVLFVVFLVLAVLFVVLALLGIGAARKAIK</sequence>
<proteinExistence type="inferred from homology"/>
<organism>
    <name type="scientific">Acidovorax sp. (strain JS42)</name>
    <dbReference type="NCBI Taxonomy" id="232721"/>
    <lineage>
        <taxon>Bacteria</taxon>
        <taxon>Pseudomonadati</taxon>
        <taxon>Pseudomonadota</taxon>
        <taxon>Betaproteobacteria</taxon>
        <taxon>Burkholderiales</taxon>
        <taxon>Comamonadaceae</taxon>
        <taxon>Acidovorax</taxon>
    </lineage>
</organism>
<comment type="subcellular location">
    <subcellularLocation>
        <location evidence="1">Cell membrane</location>
        <topology evidence="1">Multi-pass membrane protein</topology>
    </subcellularLocation>
</comment>
<comment type="similarity">
    <text evidence="1">Belongs to the UPF0391 family.</text>
</comment>
<reference key="1">
    <citation type="submission" date="2006-12" db="EMBL/GenBank/DDBJ databases">
        <title>Complete sequence of chromosome 1 of Acidovorax sp. JS42.</title>
        <authorList>
            <person name="Copeland A."/>
            <person name="Lucas S."/>
            <person name="Lapidus A."/>
            <person name="Barry K."/>
            <person name="Detter J.C."/>
            <person name="Glavina del Rio T."/>
            <person name="Dalin E."/>
            <person name="Tice H."/>
            <person name="Pitluck S."/>
            <person name="Chertkov O."/>
            <person name="Brettin T."/>
            <person name="Bruce D."/>
            <person name="Han C."/>
            <person name="Tapia R."/>
            <person name="Gilna P."/>
            <person name="Schmutz J."/>
            <person name="Larimer F."/>
            <person name="Land M."/>
            <person name="Hauser L."/>
            <person name="Kyrpides N."/>
            <person name="Kim E."/>
            <person name="Stahl D."/>
            <person name="Richardson P."/>
        </authorList>
    </citation>
    <scope>NUCLEOTIDE SEQUENCE [LARGE SCALE GENOMIC DNA]</scope>
    <source>
        <strain>JS42</strain>
    </source>
</reference>
<accession>A1W3X2</accession>
<dbReference type="EMBL" id="CP000539">
    <property type="protein sequence ID" value="ABM40947.1"/>
    <property type="molecule type" value="Genomic_DNA"/>
</dbReference>
<dbReference type="STRING" id="232721.Ajs_0703"/>
<dbReference type="KEGG" id="ajs:Ajs_0703"/>
<dbReference type="eggNOG" id="COG5487">
    <property type="taxonomic scope" value="Bacteria"/>
</dbReference>
<dbReference type="HOGENOM" id="CLU_187346_1_1_4"/>
<dbReference type="Proteomes" id="UP000000645">
    <property type="component" value="Chromosome"/>
</dbReference>
<dbReference type="GO" id="GO:0005886">
    <property type="term" value="C:plasma membrane"/>
    <property type="evidence" value="ECO:0007669"/>
    <property type="project" value="UniProtKB-SubCell"/>
</dbReference>
<dbReference type="HAMAP" id="MF_01361">
    <property type="entry name" value="UPF0391"/>
    <property type="match status" value="1"/>
</dbReference>
<dbReference type="InterPro" id="IPR009760">
    <property type="entry name" value="DUF1328"/>
</dbReference>
<dbReference type="NCBIfam" id="NF010235">
    <property type="entry name" value="PRK13682.2-6"/>
    <property type="match status" value="1"/>
</dbReference>
<dbReference type="Pfam" id="PF07043">
    <property type="entry name" value="DUF1328"/>
    <property type="match status" value="1"/>
</dbReference>
<dbReference type="PIRSF" id="PIRSF036466">
    <property type="entry name" value="UCP036466"/>
    <property type="match status" value="1"/>
</dbReference>
<gene>
    <name type="ordered locus">Ajs_0703</name>
</gene>
<name>Y703_ACISJ</name>